<proteinExistence type="inferred from homology"/>
<reference key="1">
    <citation type="journal article" date="2005" name="Genome Res.">
        <title>The Chlamydophila abortus genome sequence reveals an array of variable proteins that contribute to interspecies variation.</title>
        <authorList>
            <person name="Thomson N.R."/>
            <person name="Yeats C."/>
            <person name="Bell K."/>
            <person name="Holden M.T.G."/>
            <person name="Bentley S.D."/>
            <person name="Livingstone M."/>
            <person name="Cerdeno-Tarraga A.-M."/>
            <person name="Harris B."/>
            <person name="Doggett J."/>
            <person name="Ormond D."/>
            <person name="Mungall K."/>
            <person name="Clarke K."/>
            <person name="Feltwell T."/>
            <person name="Hance Z."/>
            <person name="Sanders M."/>
            <person name="Quail M.A."/>
            <person name="Price C."/>
            <person name="Barrell B.G."/>
            <person name="Parkhill J."/>
            <person name="Longbottom D."/>
        </authorList>
    </citation>
    <scope>NUCLEOTIDE SEQUENCE [LARGE SCALE GENOMIC DNA]</scope>
    <source>
        <strain>DSM 27085 / S26/3</strain>
    </source>
</reference>
<feature type="chain" id="PRO_0000225524" description="DNA-directed RNA polymerase subunit beta'">
    <location>
        <begin position="1"/>
        <end position="1393"/>
    </location>
</feature>
<feature type="binding site" evidence="1">
    <location>
        <position position="72"/>
    </location>
    <ligand>
        <name>Zn(2+)</name>
        <dbReference type="ChEBI" id="CHEBI:29105"/>
        <label>1</label>
    </ligand>
</feature>
<feature type="binding site" evidence="1">
    <location>
        <position position="74"/>
    </location>
    <ligand>
        <name>Zn(2+)</name>
        <dbReference type="ChEBI" id="CHEBI:29105"/>
        <label>1</label>
    </ligand>
</feature>
<feature type="binding site" evidence="1">
    <location>
        <position position="87"/>
    </location>
    <ligand>
        <name>Zn(2+)</name>
        <dbReference type="ChEBI" id="CHEBI:29105"/>
        <label>1</label>
    </ligand>
</feature>
<feature type="binding site" evidence="1">
    <location>
        <position position="90"/>
    </location>
    <ligand>
        <name>Zn(2+)</name>
        <dbReference type="ChEBI" id="CHEBI:29105"/>
        <label>1</label>
    </ligand>
</feature>
<feature type="binding site" evidence="1">
    <location>
        <position position="463"/>
    </location>
    <ligand>
        <name>Mg(2+)</name>
        <dbReference type="ChEBI" id="CHEBI:18420"/>
    </ligand>
</feature>
<feature type="binding site" evidence="1">
    <location>
        <position position="465"/>
    </location>
    <ligand>
        <name>Mg(2+)</name>
        <dbReference type="ChEBI" id="CHEBI:18420"/>
    </ligand>
</feature>
<feature type="binding site" evidence="1">
    <location>
        <position position="467"/>
    </location>
    <ligand>
        <name>Mg(2+)</name>
        <dbReference type="ChEBI" id="CHEBI:18420"/>
    </ligand>
</feature>
<feature type="binding site" evidence="1">
    <location>
        <position position="812"/>
    </location>
    <ligand>
        <name>Zn(2+)</name>
        <dbReference type="ChEBI" id="CHEBI:29105"/>
        <label>2</label>
    </ligand>
</feature>
<feature type="binding site" evidence="1">
    <location>
        <position position="887"/>
    </location>
    <ligand>
        <name>Zn(2+)</name>
        <dbReference type="ChEBI" id="CHEBI:29105"/>
        <label>2</label>
    </ligand>
</feature>
<feature type="binding site" evidence="1">
    <location>
        <position position="894"/>
    </location>
    <ligand>
        <name>Zn(2+)</name>
        <dbReference type="ChEBI" id="CHEBI:29105"/>
        <label>2</label>
    </ligand>
</feature>
<feature type="binding site" evidence="1">
    <location>
        <position position="897"/>
    </location>
    <ligand>
        <name>Zn(2+)</name>
        <dbReference type="ChEBI" id="CHEBI:29105"/>
        <label>2</label>
    </ligand>
</feature>
<evidence type="ECO:0000255" key="1">
    <source>
        <dbReference type="HAMAP-Rule" id="MF_01322"/>
    </source>
</evidence>
<accession>Q5L5I4</accession>
<sequence>MFGEGSRDNVALSKEGLFDKLEIGIASDITIRDKWSCGEIKKPETINYRTFKPEKGGLFCEKIFGPTKDWECCCGKYKKIKHKGIVCDRCGVEVTLSKVRRERMAHIELAVLIVHIWFFKTTPSRIGNVLGMTASDLERIIYYEEYVVIDPGKTDLNKKQLLNDAQYREVIEKWGKDSFVAKMGGEAIYDLLKSEDLQSLLKELKDRLRKTKSQQARMKLAKRLKIIEGFVSSSNHAEWMVLKSVPVVPPDLRPLVPLDGGRFATSDLNDLYRRVINRNNRLKAILRLKTPEVIVRNEKRMLQEAVDALFDNGRHGHPVMGAGNRPLKSLSEMLKGKNGRFRQNLLGKRVDYSGRSVIIVGPELKFNQCGLPKEMALELFEPFIIKRLKDQGSVYTIRSAKKMIQRGAPEVWDVLEEIIKGHPVLLNRAPTLHRLGIQAFEPVLIEGKAIRVHPLVCAAFNADFDGDQMAVHVPLSIEAQLEAKVLMMAPDNIFLPSSGKPVATPSKDMTLGIYYLMADPTYFPEDHGGKIKIFKDVTEVLRALYSGGFLDEHTDGRRDETGRGIHIHEKIKVRIDGQVIETTPGRVLFNRIVPKELGFQNYSMPSKRISELILQCYKKVGLEATVRFLDDLKDLGFIQATKAAISMGLKDVKIPEIKSEILKEAYDKVAIVKKQYDDGIITDGERHSKTISIWTEVSELLSDALYVEISKQTKSKHNPLFLMIDSGARGNKSQLKQLGALRGLMAKPNGAIIESPITSNFREGLTVLEYSISSHGARKGLADTALKTADSGYLTRRLVDVAQDVIITEKDCGTLNHIEITAIRQGSEELLPLKDRIYGRTVSEDIYQPGDKSKLLAENGDVITSAQAELIDDAGIESIKIRSTLTCESRRGVCAKCYGLNLANGRLIGLGEAVGIIAAQSIGEPGTQLTMRTFHLGGIAATSSTPEIVTNCDGILVYIDLRVVVGQDGNHLVLNKKGAIHVVRDEGRSLEEYKKLLSTKSIESLETYPVELGVKILVGDGEKVTAGQRIAEVELHNIPIICDKPGFVKYEDLVEGISTEKVANKNTGLVELIVKQHRGELHPQIAIYSDPGLTELVGTYAIPSGAIVSVEENQKVDPGMLLARLPRGAIKTKDITGGLPRVAELVEARKPEDAADIAKIDGVVDFKGIQKNKRILVVRDEITGMEEEHLIPLTKHLIVQRGDHVMKGQQLTDGLVVPHEILEICGVRELQKYLVNEVQEVYRLQGVDINDKHVEIIVRQMLQKVRITDPGDTTLLFGEEVNKKEFYEENKRTEEEGGKPAQAVPVLLGITKASLGTESFISAASFQDTTRVLTDAACSSKTDYLLGFKENVIMGHMIPGGTGFDTHKRIKQYLEKEQEELVFDFVSESECAC</sequence>
<organism>
    <name type="scientific">Chlamydia abortus (strain DSM 27085 / S26/3)</name>
    <name type="common">Chlamydophila abortus</name>
    <dbReference type="NCBI Taxonomy" id="218497"/>
    <lineage>
        <taxon>Bacteria</taxon>
        <taxon>Pseudomonadati</taxon>
        <taxon>Chlamydiota</taxon>
        <taxon>Chlamydiia</taxon>
        <taxon>Chlamydiales</taxon>
        <taxon>Chlamydiaceae</taxon>
        <taxon>Chlamydia/Chlamydophila group</taxon>
        <taxon>Chlamydia</taxon>
    </lineage>
</organism>
<comment type="function">
    <text evidence="1">DNA-dependent RNA polymerase catalyzes the transcription of DNA into RNA using the four ribonucleoside triphosphates as substrates.</text>
</comment>
<comment type="catalytic activity">
    <reaction evidence="1">
        <text>RNA(n) + a ribonucleoside 5'-triphosphate = RNA(n+1) + diphosphate</text>
        <dbReference type="Rhea" id="RHEA:21248"/>
        <dbReference type="Rhea" id="RHEA-COMP:14527"/>
        <dbReference type="Rhea" id="RHEA-COMP:17342"/>
        <dbReference type="ChEBI" id="CHEBI:33019"/>
        <dbReference type="ChEBI" id="CHEBI:61557"/>
        <dbReference type="ChEBI" id="CHEBI:140395"/>
        <dbReference type="EC" id="2.7.7.6"/>
    </reaction>
</comment>
<comment type="cofactor">
    <cofactor evidence="1">
        <name>Mg(2+)</name>
        <dbReference type="ChEBI" id="CHEBI:18420"/>
    </cofactor>
    <text evidence="1">Binds 1 Mg(2+) ion per subunit.</text>
</comment>
<comment type="cofactor">
    <cofactor evidence="1">
        <name>Zn(2+)</name>
        <dbReference type="ChEBI" id="CHEBI:29105"/>
    </cofactor>
    <text evidence="1">Binds 2 Zn(2+) ions per subunit.</text>
</comment>
<comment type="subunit">
    <text evidence="1">The RNAP catalytic core consists of 2 alpha, 1 beta, 1 beta' and 1 omega subunit. When a sigma factor is associated with the core the holoenzyme is formed, which can initiate transcription.</text>
</comment>
<comment type="similarity">
    <text evidence="1">Belongs to the RNA polymerase beta' chain family.</text>
</comment>
<protein>
    <recommendedName>
        <fullName evidence="1">DNA-directed RNA polymerase subunit beta'</fullName>
        <shortName evidence="1">RNAP subunit beta'</shortName>
        <ecNumber evidence="1">2.7.7.6</ecNumber>
    </recommendedName>
    <alternativeName>
        <fullName evidence="1">RNA polymerase subunit beta'</fullName>
    </alternativeName>
    <alternativeName>
        <fullName evidence="1">Transcriptase subunit beta'</fullName>
    </alternativeName>
</protein>
<gene>
    <name evidence="1" type="primary">rpoC</name>
    <name type="ordered locus">CAB660</name>
</gene>
<keyword id="KW-0240">DNA-directed RNA polymerase</keyword>
<keyword id="KW-0460">Magnesium</keyword>
<keyword id="KW-0479">Metal-binding</keyword>
<keyword id="KW-0548">Nucleotidyltransferase</keyword>
<keyword id="KW-0804">Transcription</keyword>
<keyword id="KW-0808">Transferase</keyword>
<keyword id="KW-0862">Zinc</keyword>
<dbReference type="EC" id="2.7.7.6" evidence="1"/>
<dbReference type="EMBL" id="CR848038">
    <property type="protein sequence ID" value="CAH64107.1"/>
    <property type="molecule type" value="Genomic_DNA"/>
</dbReference>
<dbReference type="RefSeq" id="WP_011097243.1">
    <property type="nucleotide sequence ID" value="NC_004552.2"/>
</dbReference>
<dbReference type="SMR" id="Q5L5I4"/>
<dbReference type="KEGG" id="cab:CAB660"/>
<dbReference type="eggNOG" id="COG0086">
    <property type="taxonomic scope" value="Bacteria"/>
</dbReference>
<dbReference type="HOGENOM" id="CLU_000524_3_1_0"/>
<dbReference type="OrthoDB" id="9815296at2"/>
<dbReference type="Proteomes" id="UP000001012">
    <property type="component" value="Chromosome"/>
</dbReference>
<dbReference type="GO" id="GO:0000428">
    <property type="term" value="C:DNA-directed RNA polymerase complex"/>
    <property type="evidence" value="ECO:0007669"/>
    <property type="project" value="UniProtKB-KW"/>
</dbReference>
<dbReference type="GO" id="GO:0003677">
    <property type="term" value="F:DNA binding"/>
    <property type="evidence" value="ECO:0007669"/>
    <property type="project" value="UniProtKB-UniRule"/>
</dbReference>
<dbReference type="GO" id="GO:0003899">
    <property type="term" value="F:DNA-directed RNA polymerase activity"/>
    <property type="evidence" value="ECO:0007669"/>
    <property type="project" value="UniProtKB-UniRule"/>
</dbReference>
<dbReference type="GO" id="GO:0000287">
    <property type="term" value="F:magnesium ion binding"/>
    <property type="evidence" value="ECO:0007669"/>
    <property type="project" value="UniProtKB-UniRule"/>
</dbReference>
<dbReference type="GO" id="GO:0008270">
    <property type="term" value="F:zinc ion binding"/>
    <property type="evidence" value="ECO:0007669"/>
    <property type="project" value="UniProtKB-UniRule"/>
</dbReference>
<dbReference type="GO" id="GO:0006351">
    <property type="term" value="P:DNA-templated transcription"/>
    <property type="evidence" value="ECO:0007669"/>
    <property type="project" value="UniProtKB-UniRule"/>
</dbReference>
<dbReference type="CDD" id="cd02655">
    <property type="entry name" value="RNAP_beta'_C"/>
    <property type="match status" value="1"/>
</dbReference>
<dbReference type="CDD" id="cd01609">
    <property type="entry name" value="RNAP_beta'_N"/>
    <property type="match status" value="1"/>
</dbReference>
<dbReference type="Gene3D" id="1.10.132.30">
    <property type="match status" value="1"/>
</dbReference>
<dbReference type="Gene3D" id="1.10.150.390">
    <property type="match status" value="1"/>
</dbReference>
<dbReference type="Gene3D" id="1.10.1790.20">
    <property type="match status" value="1"/>
</dbReference>
<dbReference type="Gene3D" id="1.10.40.90">
    <property type="match status" value="1"/>
</dbReference>
<dbReference type="Gene3D" id="2.40.40.20">
    <property type="match status" value="1"/>
</dbReference>
<dbReference type="Gene3D" id="2.40.50.100">
    <property type="match status" value="3"/>
</dbReference>
<dbReference type="Gene3D" id="4.10.860.120">
    <property type="entry name" value="RNA polymerase II, clamp domain"/>
    <property type="match status" value="1"/>
</dbReference>
<dbReference type="Gene3D" id="1.10.274.100">
    <property type="entry name" value="RNA polymerase Rpb1, domain 3"/>
    <property type="match status" value="1"/>
</dbReference>
<dbReference type="HAMAP" id="MF_01322">
    <property type="entry name" value="RNApol_bact_RpoC"/>
    <property type="match status" value="1"/>
</dbReference>
<dbReference type="InterPro" id="IPR045867">
    <property type="entry name" value="DNA-dir_RpoC_beta_prime"/>
</dbReference>
<dbReference type="InterPro" id="IPR012754">
    <property type="entry name" value="DNA-dir_RpoC_beta_prime_bact"/>
</dbReference>
<dbReference type="InterPro" id="IPR000722">
    <property type="entry name" value="RNA_pol_asu"/>
</dbReference>
<dbReference type="InterPro" id="IPR006592">
    <property type="entry name" value="RNA_pol_N"/>
</dbReference>
<dbReference type="InterPro" id="IPR007080">
    <property type="entry name" value="RNA_pol_Rpb1_1"/>
</dbReference>
<dbReference type="InterPro" id="IPR007066">
    <property type="entry name" value="RNA_pol_Rpb1_3"/>
</dbReference>
<dbReference type="InterPro" id="IPR042102">
    <property type="entry name" value="RNA_pol_Rpb1_3_sf"/>
</dbReference>
<dbReference type="InterPro" id="IPR007083">
    <property type="entry name" value="RNA_pol_Rpb1_4"/>
</dbReference>
<dbReference type="InterPro" id="IPR007081">
    <property type="entry name" value="RNA_pol_Rpb1_5"/>
</dbReference>
<dbReference type="InterPro" id="IPR044893">
    <property type="entry name" value="RNA_pol_Rpb1_clamp_domain"/>
</dbReference>
<dbReference type="InterPro" id="IPR038120">
    <property type="entry name" value="Rpb1_funnel_sf"/>
</dbReference>
<dbReference type="NCBIfam" id="TIGR02386">
    <property type="entry name" value="rpoC_TIGR"/>
    <property type="match status" value="1"/>
</dbReference>
<dbReference type="PANTHER" id="PTHR19376">
    <property type="entry name" value="DNA-DIRECTED RNA POLYMERASE"/>
    <property type="match status" value="1"/>
</dbReference>
<dbReference type="PANTHER" id="PTHR19376:SF54">
    <property type="entry name" value="DNA-DIRECTED RNA POLYMERASE SUBUNIT BETA"/>
    <property type="match status" value="1"/>
</dbReference>
<dbReference type="Pfam" id="PF04997">
    <property type="entry name" value="RNA_pol_Rpb1_1"/>
    <property type="match status" value="1"/>
</dbReference>
<dbReference type="Pfam" id="PF00623">
    <property type="entry name" value="RNA_pol_Rpb1_2"/>
    <property type="match status" value="1"/>
</dbReference>
<dbReference type="Pfam" id="PF04983">
    <property type="entry name" value="RNA_pol_Rpb1_3"/>
    <property type="match status" value="1"/>
</dbReference>
<dbReference type="Pfam" id="PF05000">
    <property type="entry name" value="RNA_pol_Rpb1_4"/>
    <property type="match status" value="1"/>
</dbReference>
<dbReference type="Pfam" id="PF04998">
    <property type="entry name" value="RNA_pol_Rpb1_5"/>
    <property type="match status" value="1"/>
</dbReference>
<dbReference type="SMART" id="SM00663">
    <property type="entry name" value="RPOLA_N"/>
    <property type="match status" value="1"/>
</dbReference>
<dbReference type="SUPFAM" id="SSF64484">
    <property type="entry name" value="beta and beta-prime subunits of DNA dependent RNA-polymerase"/>
    <property type="match status" value="1"/>
</dbReference>
<name>RPOC_CHLAB</name>